<keyword id="KW-0456">Lyase</keyword>
<keyword id="KW-0663">Pyridoxal phosphate</keyword>
<keyword id="KW-1185">Reference proteome</keyword>
<keyword id="KW-0704">Schiff base</keyword>
<dbReference type="EC" id="4.3.3.6" evidence="1"/>
<dbReference type="EMBL" id="AE017143">
    <property type="protein sequence ID" value="AAP96373.1"/>
    <property type="molecule type" value="Genomic_DNA"/>
</dbReference>
<dbReference type="RefSeq" id="WP_010945405.1">
    <property type="nucleotide sequence ID" value="NC_002940.2"/>
</dbReference>
<dbReference type="SMR" id="Q7VL86"/>
<dbReference type="STRING" id="233412.HD_1593"/>
<dbReference type="KEGG" id="hdu:HD_1593"/>
<dbReference type="eggNOG" id="COG0214">
    <property type="taxonomic scope" value="Bacteria"/>
</dbReference>
<dbReference type="HOGENOM" id="CLU_055352_1_0_6"/>
<dbReference type="OrthoDB" id="9772545at2"/>
<dbReference type="UniPathway" id="UPA00245"/>
<dbReference type="Proteomes" id="UP000001022">
    <property type="component" value="Chromosome"/>
</dbReference>
<dbReference type="GO" id="GO:0036381">
    <property type="term" value="F:pyridoxal 5'-phosphate synthase (glutamine hydrolysing) activity"/>
    <property type="evidence" value="ECO:0007669"/>
    <property type="project" value="UniProtKB-UniRule"/>
</dbReference>
<dbReference type="GO" id="GO:0006520">
    <property type="term" value="P:amino acid metabolic process"/>
    <property type="evidence" value="ECO:0007669"/>
    <property type="project" value="TreeGrafter"/>
</dbReference>
<dbReference type="GO" id="GO:0042823">
    <property type="term" value="P:pyridoxal phosphate biosynthetic process"/>
    <property type="evidence" value="ECO:0007669"/>
    <property type="project" value="UniProtKB-UniRule"/>
</dbReference>
<dbReference type="GO" id="GO:0008615">
    <property type="term" value="P:pyridoxine biosynthetic process"/>
    <property type="evidence" value="ECO:0007669"/>
    <property type="project" value="TreeGrafter"/>
</dbReference>
<dbReference type="CDD" id="cd04727">
    <property type="entry name" value="pdxS"/>
    <property type="match status" value="1"/>
</dbReference>
<dbReference type="FunFam" id="3.20.20.70:FF:000001">
    <property type="entry name" value="Pyridoxine biosynthesis protein PDX1"/>
    <property type="match status" value="1"/>
</dbReference>
<dbReference type="Gene3D" id="3.20.20.70">
    <property type="entry name" value="Aldolase class I"/>
    <property type="match status" value="1"/>
</dbReference>
<dbReference type="HAMAP" id="MF_01824">
    <property type="entry name" value="PdxS"/>
    <property type="match status" value="1"/>
</dbReference>
<dbReference type="InterPro" id="IPR013785">
    <property type="entry name" value="Aldolase_TIM"/>
</dbReference>
<dbReference type="InterPro" id="IPR001852">
    <property type="entry name" value="PdxS/SNZ"/>
</dbReference>
<dbReference type="InterPro" id="IPR033755">
    <property type="entry name" value="PdxS/SNZ_N"/>
</dbReference>
<dbReference type="InterPro" id="IPR011060">
    <property type="entry name" value="RibuloseP-bd_barrel"/>
</dbReference>
<dbReference type="NCBIfam" id="NF003215">
    <property type="entry name" value="PRK04180.1"/>
    <property type="match status" value="1"/>
</dbReference>
<dbReference type="NCBIfam" id="TIGR00343">
    <property type="entry name" value="pyridoxal 5'-phosphate synthase lyase subunit PdxS"/>
    <property type="match status" value="1"/>
</dbReference>
<dbReference type="PANTHER" id="PTHR31829">
    <property type="entry name" value="PYRIDOXAL 5'-PHOSPHATE SYNTHASE SUBUNIT SNZ1-RELATED"/>
    <property type="match status" value="1"/>
</dbReference>
<dbReference type="PANTHER" id="PTHR31829:SF0">
    <property type="entry name" value="PYRIDOXAL 5'-PHOSPHATE SYNTHASE SUBUNIT SNZ1-RELATED"/>
    <property type="match status" value="1"/>
</dbReference>
<dbReference type="Pfam" id="PF01680">
    <property type="entry name" value="SOR_SNZ"/>
    <property type="match status" value="1"/>
</dbReference>
<dbReference type="PIRSF" id="PIRSF029271">
    <property type="entry name" value="Pdx1"/>
    <property type="match status" value="1"/>
</dbReference>
<dbReference type="SUPFAM" id="SSF51366">
    <property type="entry name" value="Ribulose-phoshate binding barrel"/>
    <property type="match status" value="1"/>
</dbReference>
<dbReference type="PROSITE" id="PS01235">
    <property type="entry name" value="PDXS_SNZ_1"/>
    <property type="match status" value="1"/>
</dbReference>
<dbReference type="PROSITE" id="PS51129">
    <property type="entry name" value="PDXS_SNZ_2"/>
    <property type="match status" value="1"/>
</dbReference>
<name>PDXS_HAEDU</name>
<comment type="function">
    <text evidence="1">Catalyzes the formation of pyridoxal 5'-phosphate from ribose 5-phosphate (RBP), glyceraldehyde 3-phosphate (G3P) and ammonia. The ammonia is provided by the PdxT subunit. Can also use ribulose 5-phosphate and dihydroxyacetone phosphate as substrates, resulting from enzyme-catalyzed isomerization of RBP and G3P, respectively.</text>
</comment>
<comment type="catalytic activity">
    <reaction evidence="1">
        <text>aldehydo-D-ribose 5-phosphate + D-glyceraldehyde 3-phosphate + L-glutamine = pyridoxal 5'-phosphate + L-glutamate + phosphate + 3 H2O + H(+)</text>
        <dbReference type="Rhea" id="RHEA:31507"/>
        <dbReference type="ChEBI" id="CHEBI:15377"/>
        <dbReference type="ChEBI" id="CHEBI:15378"/>
        <dbReference type="ChEBI" id="CHEBI:29985"/>
        <dbReference type="ChEBI" id="CHEBI:43474"/>
        <dbReference type="ChEBI" id="CHEBI:58273"/>
        <dbReference type="ChEBI" id="CHEBI:58359"/>
        <dbReference type="ChEBI" id="CHEBI:59776"/>
        <dbReference type="ChEBI" id="CHEBI:597326"/>
        <dbReference type="EC" id="4.3.3.6"/>
    </reaction>
</comment>
<comment type="pathway">
    <text evidence="1">Cofactor biosynthesis; pyridoxal 5'-phosphate biosynthesis.</text>
</comment>
<comment type="subunit">
    <text evidence="1">In the presence of PdxT, forms a dodecamer of heterodimers.</text>
</comment>
<comment type="similarity">
    <text evidence="1">Belongs to the PdxS/SNZ family.</text>
</comment>
<sequence length="295" mass="31876">MSVILGSDLVKRGMAQMQKGGVIMDVVNAEQARIAEAAGAVAVMALERVPSDIRAAGGVARMANPRIVKEVMEAVSIPVMAKARIGHITEARVLEAMGVDYIDESEVLTPADEEFHLLKSEYTVPFVCGCRDLGEALRRIGEGASMLRTKGEPGTGNIVEAVRHMRKVNSQVRKVVNMSTDELMTEAKILGAPFELLLQIKQLGKLPVVNFAAGGVATPADAALMMELGADGVFVGSGIFKAENPEKFARAIVQATTHYQDYDLIARLSEELGEPMRGLEISKLSVQDRMQERGW</sequence>
<proteinExistence type="inferred from homology"/>
<accession>Q7VL86</accession>
<organism>
    <name type="scientific">Haemophilus ducreyi (strain 35000HP / ATCC 700724)</name>
    <dbReference type="NCBI Taxonomy" id="233412"/>
    <lineage>
        <taxon>Bacteria</taxon>
        <taxon>Pseudomonadati</taxon>
        <taxon>Pseudomonadota</taxon>
        <taxon>Gammaproteobacteria</taxon>
        <taxon>Pasteurellales</taxon>
        <taxon>Pasteurellaceae</taxon>
        <taxon>Haemophilus</taxon>
    </lineage>
</organism>
<reference key="1">
    <citation type="submission" date="2003-06" db="EMBL/GenBank/DDBJ databases">
        <title>The complete genome sequence of Haemophilus ducreyi.</title>
        <authorList>
            <person name="Munson R.S. Jr."/>
            <person name="Ray W.C."/>
            <person name="Mahairas G."/>
            <person name="Sabo P."/>
            <person name="Mungur R."/>
            <person name="Johnson L."/>
            <person name="Nguyen D."/>
            <person name="Wang J."/>
            <person name="Forst C."/>
            <person name="Hood L."/>
        </authorList>
    </citation>
    <scope>NUCLEOTIDE SEQUENCE [LARGE SCALE GENOMIC DNA]</scope>
    <source>
        <strain>35000HP / ATCC 700724</strain>
    </source>
</reference>
<feature type="chain" id="PRO_0000109396" description="Pyridoxal 5'-phosphate synthase subunit PdxS">
    <location>
        <begin position="1"/>
        <end position="295"/>
    </location>
</feature>
<feature type="active site" description="Schiff-base intermediate with D-ribose 5-phosphate" evidence="1">
    <location>
        <position position="82"/>
    </location>
</feature>
<feature type="binding site" evidence="1">
    <location>
        <position position="25"/>
    </location>
    <ligand>
        <name>D-ribose 5-phosphate</name>
        <dbReference type="ChEBI" id="CHEBI:78346"/>
    </ligand>
</feature>
<feature type="binding site" evidence="1">
    <location>
        <position position="154"/>
    </location>
    <ligand>
        <name>D-ribose 5-phosphate</name>
        <dbReference type="ChEBI" id="CHEBI:78346"/>
    </ligand>
</feature>
<feature type="binding site" evidence="1">
    <location>
        <position position="166"/>
    </location>
    <ligand>
        <name>D-glyceraldehyde 3-phosphate</name>
        <dbReference type="ChEBI" id="CHEBI:59776"/>
    </ligand>
</feature>
<feature type="binding site" evidence="1">
    <location>
        <position position="215"/>
    </location>
    <ligand>
        <name>D-ribose 5-phosphate</name>
        <dbReference type="ChEBI" id="CHEBI:78346"/>
    </ligand>
</feature>
<feature type="binding site" evidence="1">
    <location>
        <begin position="236"/>
        <end position="237"/>
    </location>
    <ligand>
        <name>D-ribose 5-phosphate</name>
        <dbReference type="ChEBI" id="CHEBI:78346"/>
    </ligand>
</feature>
<gene>
    <name evidence="1" type="primary">pdxS</name>
    <name type="ordered locus">HD_1593</name>
</gene>
<evidence type="ECO:0000255" key="1">
    <source>
        <dbReference type="HAMAP-Rule" id="MF_01824"/>
    </source>
</evidence>
<protein>
    <recommendedName>
        <fullName evidence="1">Pyridoxal 5'-phosphate synthase subunit PdxS</fullName>
        <shortName evidence="1">PLP synthase subunit PdxS</shortName>
        <ecNumber evidence="1">4.3.3.6</ecNumber>
    </recommendedName>
    <alternativeName>
        <fullName evidence="1">Pdx1</fullName>
    </alternativeName>
</protein>